<protein>
    <recommendedName>
        <fullName evidence="1">Methenyltetrahydromethanopterin cyclohydrolase</fullName>
        <ecNumber evidence="1">3.5.4.27</ecNumber>
    </recommendedName>
    <alternativeName>
        <fullName evidence="1">Methenyl-H4MPT cyclohydrolase</fullName>
    </alternativeName>
</protein>
<organism>
    <name type="scientific">Methanococcus maripaludis (strain C7 / ATCC BAA-1331)</name>
    <dbReference type="NCBI Taxonomy" id="426368"/>
    <lineage>
        <taxon>Archaea</taxon>
        <taxon>Methanobacteriati</taxon>
        <taxon>Methanobacteriota</taxon>
        <taxon>Methanomada group</taxon>
        <taxon>Methanococci</taxon>
        <taxon>Methanococcales</taxon>
        <taxon>Methanococcaceae</taxon>
        <taxon>Methanococcus</taxon>
    </lineage>
</organism>
<dbReference type="EC" id="3.5.4.27" evidence="1"/>
<dbReference type="EMBL" id="CP000745">
    <property type="protein sequence ID" value="ABR65507.1"/>
    <property type="molecule type" value="Genomic_DNA"/>
</dbReference>
<dbReference type="SMR" id="A6VGD1"/>
<dbReference type="STRING" id="426368.MmarC7_0438"/>
<dbReference type="KEGG" id="mmz:MmarC7_0438"/>
<dbReference type="eggNOG" id="arCOG02675">
    <property type="taxonomic scope" value="Archaea"/>
</dbReference>
<dbReference type="HOGENOM" id="CLU_876031_0_0_2"/>
<dbReference type="OrthoDB" id="105468at2157"/>
<dbReference type="UniPathway" id="UPA00640">
    <property type="reaction ID" value="UER00694"/>
</dbReference>
<dbReference type="GO" id="GO:0005737">
    <property type="term" value="C:cytoplasm"/>
    <property type="evidence" value="ECO:0007669"/>
    <property type="project" value="UniProtKB-SubCell"/>
</dbReference>
<dbReference type="GO" id="GO:0018759">
    <property type="term" value="F:methenyltetrahydromethanopterin cyclohydrolase activity"/>
    <property type="evidence" value="ECO:0007669"/>
    <property type="project" value="UniProtKB-UniRule"/>
</dbReference>
<dbReference type="GO" id="GO:0019386">
    <property type="term" value="P:methanogenesis, from carbon dioxide"/>
    <property type="evidence" value="ECO:0007669"/>
    <property type="project" value="UniProtKB-UniRule"/>
</dbReference>
<dbReference type="GO" id="GO:0006730">
    <property type="term" value="P:one-carbon metabolic process"/>
    <property type="evidence" value="ECO:0007669"/>
    <property type="project" value="UniProtKB-UniRule"/>
</dbReference>
<dbReference type="CDD" id="cd00545">
    <property type="entry name" value="MCH"/>
    <property type="match status" value="1"/>
</dbReference>
<dbReference type="Gene3D" id="3.10.340.11">
    <property type="entry name" value="Methenyltetrahydromethanopterin Cyclohydrolase, Chain A, domain 1"/>
    <property type="match status" value="1"/>
</dbReference>
<dbReference type="Gene3D" id="3.30.1030.10">
    <property type="entry name" value="Methenyltetrahydromethanopterin Cyclohydrolase, Chain A, domain 2"/>
    <property type="match status" value="1"/>
</dbReference>
<dbReference type="HAMAP" id="MF_00486">
    <property type="entry name" value="McH"/>
    <property type="match status" value="1"/>
</dbReference>
<dbReference type="InterPro" id="IPR003209">
    <property type="entry name" value="METHMP_CycHdrlase"/>
</dbReference>
<dbReference type="NCBIfam" id="TIGR03120">
    <property type="entry name" value="one_C_mch"/>
    <property type="match status" value="1"/>
</dbReference>
<dbReference type="Pfam" id="PF02289">
    <property type="entry name" value="MCH"/>
    <property type="match status" value="1"/>
</dbReference>
<dbReference type="SUPFAM" id="SSF56199">
    <property type="entry name" value="Methenyltetrahydromethanopterin cyclohydrolase"/>
    <property type="match status" value="1"/>
</dbReference>
<gene>
    <name evidence="1" type="primary">mch</name>
    <name type="ordered locus">MmarC7_0438</name>
</gene>
<proteinExistence type="inferred from homology"/>
<reference key="1">
    <citation type="submission" date="2007-06" db="EMBL/GenBank/DDBJ databases">
        <title>Complete sequence of Methanococcus maripaludis C7.</title>
        <authorList>
            <consortium name="US DOE Joint Genome Institute"/>
            <person name="Copeland A."/>
            <person name="Lucas S."/>
            <person name="Lapidus A."/>
            <person name="Barry K."/>
            <person name="Glavina del Rio T."/>
            <person name="Dalin E."/>
            <person name="Tice H."/>
            <person name="Pitluck S."/>
            <person name="Clum A."/>
            <person name="Schmutz J."/>
            <person name="Larimer F."/>
            <person name="Land M."/>
            <person name="Hauser L."/>
            <person name="Kyrpides N."/>
            <person name="Anderson I."/>
            <person name="Sieprawska-Lupa M."/>
            <person name="Whitman W.B."/>
            <person name="Richardson P."/>
        </authorList>
    </citation>
    <scope>NUCLEOTIDE SEQUENCE [LARGE SCALE GENOMIC DNA]</scope>
    <source>
        <strain>C7 / ATCC BAA-1331</strain>
    </source>
</reference>
<keyword id="KW-0963">Cytoplasm</keyword>
<keyword id="KW-0378">Hydrolase</keyword>
<keyword id="KW-0484">Methanogenesis</keyword>
<keyword id="KW-0554">One-carbon metabolism</keyword>
<feature type="chain" id="PRO_1000014401" description="Methenyltetrahydromethanopterin cyclohydrolase">
    <location>
        <begin position="1"/>
        <end position="323"/>
    </location>
</feature>
<name>MCH_METM7</name>
<comment type="function">
    <text evidence="1">Catalyzes the reversible interconversion of 5-formyl-H(4)MPT to methenyl-H(4)MPT(+).</text>
</comment>
<comment type="catalytic activity">
    <reaction evidence="1">
        <text>5,10-methenyl-5,6,7,8-tetrahydromethanopterin + H2O = N(5)-formyl-5,6,7,8-tetrahydromethanopterin + H(+)</text>
        <dbReference type="Rhea" id="RHEA:19053"/>
        <dbReference type="ChEBI" id="CHEBI:15377"/>
        <dbReference type="ChEBI" id="CHEBI:15378"/>
        <dbReference type="ChEBI" id="CHEBI:58018"/>
        <dbReference type="ChEBI" id="CHEBI:58337"/>
        <dbReference type="EC" id="3.5.4.27"/>
    </reaction>
</comment>
<comment type="pathway">
    <text evidence="1">One-carbon metabolism; methanogenesis from CO(2); 5,10-methenyl-5,6,7,8-tetrahydromethanopterin from CO(2): step 3/3.</text>
</comment>
<comment type="subcellular location">
    <subcellularLocation>
        <location evidence="1">Cytoplasm</location>
    </subcellularLocation>
</comment>
<comment type="similarity">
    <text evidence="1">Belongs to the MCH family.</text>
</comment>
<sequence length="323" mass="34881">MLSVNLASLPIVEDMINRKEELNLEVITLENGATVLDCGVNVMGSFEAGKLFTKICLGGLAHVGISISGSLDNKLVLPCVKIKTSHPAIATLGSQKAGWSVSVGKYFAMGSGPARALAMMPKATYEEIDYRDEADIAILCLESSQLPDENVADHVAEKCGVDVSKVYLLVAPTASMVGAVQISGRVVENGTYKMLEALHFDVRKVKFAAGIAPVAPVIGDDLKMMGATNDMVLYGGRTYYYVKSDEGDDIEKLCKSLPSCSAETYGKPFLEVFKEANYDFYKIDKGMFAPAVVTINDLRTGKLMSYGETNVEVLKKSLKFSQL</sequence>
<accession>A6VGD1</accession>
<evidence type="ECO:0000255" key="1">
    <source>
        <dbReference type="HAMAP-Rule" id="MF_00486"/>
    </source>
</evidence>